<reference key="1">
    <citation type="journal article" date="2003" name="Nature">
        <title>Genome sequence of Bacillus cereus and comparative analysis with Bacillus anthracis.</title>
        <authorList>
            <person name="Ivanova N."/>
            <person name="Sorokin A."/>
            <person name="Anderson I."/>
            <person name="Galleron N."/>
            <person name="Candelon B."/>
            <person name="Kapatral V."/>
            <person name="Bhattacharyya A."/>
            <person name="Reznik G."/>
            <person name="Mikhailova N."/>
            <person name="Lapidus A."/>
            <person name="Chu L."/>
            <person name="Mazur M."/>
            <person name="Goltsman E."/>
            <person name="Larsen N."/>
            <person name="D'Souza M."/>
            <person name="Walunas T."/>
            <person name="Grechkin Y."/>
            <person name="Pusch G."/>
            <person name="Haselkorn R."/>
            <person name="Fonstein M."/>
            <person name="Ehrlich S.D."/>
            <person name="Overbeek R."/>
            <person name="Kyrpides N.C."/>
        </authorList>
    </citation>
    <scope>NUCLEOTIDE SEQUENCE [LARGE SCALE GENOMIC DNA]</scope>
    <source>
        <strain>ATCC 14579 / DSM 31 / CCUG 7414 / JCM 2152 / NBRC 15305 / NCIMB 9373 / NCTC 2599 / NRRL B-3711</strain>
    </source>
</reference>
<organism>
    <name type="scientific">Bacillus cereus (strain ATCC 14579 / DSM 31 / CCUG 7414 / JCM 2152 / NBRC 15305 / NCIMB 9373 / NCTC 2599 / NRRL B-3711)</name>
    <dbReference type="NCBI Taxonomy" id="226900"/>
    <lineage>
        <taxon>Bacteria</taxon>
        <taxon>Bacillati</taxon>
        <taxon>Bacillota</taxon>
        <taxon>Bacilli</taxon>
        <taxon>Bacillales</taxon>
        <taxon>Bacillaceae</taxon>
        <taxon>Bacillus</taxon>
        <taxon>Bacillus cereus group</taxon>
    </lineage>
</organism>
<keyword id="KW-0963">Cytoplasm</keyword>
<keyword id="KW-0255">Endonuclease</keyword>
<keyword id="KW-0378">Hydrolase</keyword>
<keyword id="KW-0460">Magnesium</keyword>
<keyword id="KW-0479">Metal-binding</keyword>
<keyword id="KW-0507">mRNA processing</keyword>
<keyword id="KW-0540">Nuclease</keyword>
<keyword id="KW-1185">Reference proteome</keyword>
<keyword id="KW-0694">RNA-binding</keyword>
<keyword id="KW-0698">rRNA processing</keyword>
<keyword id="KW-0699">rRNA-binding</keyword>
<keyword id="KW-0819">tRNA processing</keyword>
<dbReference type="EC" id="3.1.26.3" evidence="1"/>
<dbReference type="EMBL" id="AE016877">
    <property type="protein sequence ID" value="AAP10769.1"/>
    <property type="molecule type" value="Genomic_DNA"/>
</dbReference>
<dbReference type="RefSeq" id="NP_833568.1">
    <property type="nucleotide sequence ID" value="NC_004722.1"/>
</dbReference>
<dbReference type="SMR" id="Q819V8"/>
<dbReference type="STRING" id="226900.BC_3847"/>
<dbReference type="KEGG" id="bce:BC3847"/>
<dbReference type="PATRIC" id="fig|226900.8.peg.3966"/>
<dbReference type="HOGENOM" id="CLU_000907_1_3_9"/>
<dbReference type="OrthoDB" id="9805026at2"/>
<dbReference type="Proteomes" id="UP000001417">
    <property type="component" value="Chromosome"/>
</dbReference>
<dbReference type="GO" id="GO:0005829">
    <property type="term" value="C:cytosol"/>
    <property type="evidence" value="ECO:0000318"/>
    <property type="project" value="GO_Central"/>
</dbReference>
<dbReference type="GO" id="GO:0003725">
    <property type="term" value="F:double-stranded RNA binding"/>
    <property type="evidence" value="ECO:0000318"/>
    <property type="project" value="GO_Central"/>
</dbReference>
<dbReference type="GO" id="GO:0046872">
    <property type="term" value="F:metal ion binding"/>
    <property type="evidence" value="ECO:0007669"/>
    <property type="project" value="UniProtKB-KW"/>
</dbReference>
<dbReference type="GO" id="GO:0004525">
    <property type="term" value="F:ribonuclease III activity"/>
    <property type="evidence" value="ECO:0000318"/>
    <property type="project" value="GO_Central"/>
</dbReference>
<dbReference type="GO" id="GO:0019843">
    <property type="term" value="F:rRNA binding"/>
    <property type="evidence" value="ECO:0007669"/>
    <property type="project" value="UniProtKB-KW"/>
</dbReference>
<dbReference type="GO" id="GO:0006397">
    <property type="term" value="P:mRNA processing"/>
    <property type="evidence" value="ECO:0007669"/>
    <property type="project" value="UniProtKB-UniRule"/>
</dbReference>
<dbReference type="GO" id="GO:0010468">
    <property type="term" value="P:regulation of gene expression"/>
    <property type="evidence" value="ECO:0000318"/>
    <property type="project" value="GO_Central"/>
</dbReference>
<dbReference type="GO" id="GO:0006396">
    <property type="term" value="P:RNA processing"/>
    <property type="evidence" value="ECO:0000318"/>
    <property type="project" value="GO_Central"/>
</dbReference>
<dbReference type="GO" id="GO:0006364">
    <property type="term" value="P:rRNA processing"/>
    <property type="evidence" value="ECO:0007669"/>
    <property type="project" value="UniProtKB-UniRule"/>
</dbReference>
<dbReference type="GO" id="GO:0008033">
    <property type="term" value="P:tRNA processing"/>
    <property type="evidence" value="ECO:0007669"/>
    <property type="project" value="UniProtKB-KW"/>
</dbReference>
<dbReference type="CDD" id="cd10845">
    <property type="entry name" value="DSRM_RNAse_III_family"/>
    <property type="match status" value="1"/>
</dbReference>
<dbReference type="CDD" id="cd00593">
    <property type="entry name" value="RIBOc"/>
    <property type="match status" value="1"/>
</dbReference>
<dbReference type="FunFam" id="1.10.1520.10:FF:000001">
    <property type="entry name" value="Ribonuclease 3"/>
    <property type="match status" value="1"/>
</dbReference>
<dbReference type="FunFam" id="3.30.160.20:FF:000003">
    <property type="entry name" value="Ribonuclease 3"/>
    <property type="match status" value="1"/>
</dbReference>
<dbReference type="Gene3D" id="3.30.160.20">
    <property type="match status" value="1"/>
</dbReference>
<dbReference type="Gene3D" id="1.10.1520.10">
    <property type="entry name" value="Ribonuclease III domain"/>
    <property type="match status" value="1"/>
</dbReference>
<dbReference type="HAMAP" id="MF_00104">
    <property type="entry name" value="RNase_III"/>
    <property type="match status" value="1"/>
</dbReference>
<dbReference type="InterPro" id="IPR014720">
    <property type="entry name" value="dsRBD_dom"/>
</dbReference>
<dbReference type="InterPro" id="IPR011907">
    <property type="entry name" value="RNase_III"/>
</dbReference>
<dbReference type="InterPro" id="IPR000999">
    <property type="entry name" value="RNase_III_dom"/>
</dbReference>
<dbReference type="InterPro" id="IPR036389">
    <property type="entry name" value="RNase_III_sf"/>
</dbReference>
<dbReference type="NCBIfam" id="TIGR02191">
    <property type="entry name" value="RNaseIII"/>
    <property type="match status" value="1"/>
</dbReference>
<dbReference type="PANTHER" id="PTHR11207:SF0">
    <property type="entry name" value="RIBONUCLEASE 3"/>
    <property type="match status" value="1"/>
</dbReference>
<dbReference type="PANTHER" id="PTHR11207">
    <property type="entry name" value="RIBONUCLEASE III"/>
    <property type="match status" value="1"/>
</dbReference>
<dbReference type="Pfam" id="PF00035">
    <property type="entry name" value="dsrm"/>
    <property type="match status" value="1"/>
</dbReference>
<dbReference type="Pfam" id="PF14622">
    <property type="entry name" value="Ribonucleas_3_3"/>
    <property type="match status" value="1"/>
</dbReference>
<dbReference type="SMART" id="SM00358">
    <property type="entry name" value="DSRM"/>
    <property type="match status" value="1"/>
</dbReference>
<dbReference type="SMART" id="SM00535">
    <property type="entry name" value="RIBOc"/>
    <property type="match status" value="1"/>
</dbReference>
<dbReference type="SUPFAM" id="SSF54768">
    <property type="entry name" value="dsRNA-binding domain-like"/>
    <property type="match status" value="1"/>
</dbReference>
<dbReference type="SUPFAM" id="SSF69065">
    <property type="entry name" value="RNase III domain-like"/>
    <property type="match status" value="1"/>
</dbReference>
<dbReference type="PROSITE" id="PS50137">
    <property type="entry name" value="DS_RBD"/>
    <property type="match status" value="1"/>
</dbReference>
<dbReference type="PROSITE" id="PS00517">
    <property type="entry name" value="RNASE_3_1"/>
    <property type="match status" value="1"/>
</dbReference>
<dbReference type="PROSITE" id="PS50142">
    <property type="entry name" value="RNASE_3_2"/>
    <property type="match status" value="1"/>
</dbReference>
<accession>Q819V8</accession>
<gene>
    <name evidence="1" type="primary">rnc</name>
    <name type="ordered locus">BC_3847</name>
</gene>
<sequence length="245" mass="28037">MPYRKYREKKYETKYREAFKVFQEKIGITFTDEKLLIQAFTHSSYVNEHRKKPHEDNERLEFLGDAVLELTVSQYLFQKYPTMSEGELTKLRAAIVCEPSLVRFANELSFGSLVLLGKGEEMTGGRERPALLADVFEAFIGALYLDQGLETVWEFLKEIVYPKINEGAFSHVMDYKSQLQELIQRDGSGNVEYQILQEKGPAHNREFVSRVTLNNVALGLGSGKSKKEAEQQAAAEALKKLKEQL</sequence>
<name>RNC_BACCR</name>
<evidence type="ECO:0000255" key="1">
    <source>
        <dbReference type="HAMAP-Rule" id="MF_00104"/>
    </source>
</evidence>
<feature type="chain" id="PRO_0000180373" description="Ribonuclease 3">
    <location>
        <begin position="1"/>
        <end position="245"/>
    </location>
</feature>
<feature type="domain" description="RNase III" evidence="1">
    <location>
        <begin position="19"/>
        <end position="148"/>
    </location>
</feature>
<feature type="domain" description="DRBM" evidence="1">
    <location>
        <begin position="174"/>
        <end position="243"/>
    </location>
</feature>
<feature type="active site" evidence="1">
    <location>
        <position position="65"/>
    </location>
</feature>
<feature type="active site" evidence="1">
    <location>
        <position position="137"/>
    </location>
</feature>
<feature type="binding site" evidence="1">
    <location>
        <position position="61"/>
    </location>
    <ligand>
        <name>Mg(2+)</name>
        <dbReference type="ChEBI" id="CHEBI:18420"/>
    </ligand>
</feature>
<feature type="binding site" evidence="1">
    <location>
        <position position="134"/>
    </location>
    <ligand>
        <name>Mg(2+)</name>
        <dbReference type="ChEBI" id="CHEBI:18420"/>
    </ligand>
</feature>
<feature type="binding site" evidence="1">
    <location>
        <position position="137"/>
    </location>
    <ligand>
        <name>Mg(2+)</name>
        <dbReference type="ChEBI" id="CHEBI:18420"/>
    </ligand>
</feature>
<comment type="function">
    <text evidence="1">Digests double-stranded RNA. Involved in the processing of primary rRNA transcript to yield the immediate precursors to the large and small rRNAs (23S and 16S). Processes some mRNAs, and tRNAs when they are encoded in the rRNA operon. Processes pre-crRNA and tracrRNA of type II CRISPR loci if present in the organism.</text>
</comment>
<comment type="catalytic activity">
    <reaction evidence="1">
        <text>Endonucleolytic cleavage to 5'-phosphomonoester.</text>
        <dbReference type="EC" id="3.1.26.3"/>
    </reaction>
</comment>
<comment type="cofactor">
    <cofactor evidence="1">
        <name>Mg(2+)</name>
        <dbReference type="ChEBI" id="CHEBI:18420"/>
    </cofactor>
</comment>
<comment type="subunit">
    <text evidence="1">Homodimer.</text>
</comment>
<comment type="subcellular location">
    <subcellularLocation>
        <location evidence="1">Cytoplasm</location>
    </subcellularLocation>
</comment>
<comment type="similarity">
    <text evidence="1">Belongs to the ribonuclease III family.</text>
</comment>
<protein>
    <recommendedName>
        <fullName evidence="1">Ribonuclease 3</fullName>
        <ecNumber evidence="1">3.1.26.3</ecNumber>
    </recommendedName>
    <alternativeName>
        <fullName evidence="1">Ribonuclease III</fullName>
        <shortName evidence="1">RNase III</shortName>
    </alternativeName>
</protein>
<proteinExistence type="inferred from homology"/>